<feature type="chain" id="PRO_0000168168" description="Reticulon-like protein 1">
    <location>
        <begin position="1"/>
        <end position="295"/>
    </location>
</feature>
<feature type="topological domain" description="Cytoplasmic" evidence="1">
    <location>
        <begin position="1"/>
        <end position="50"/>
    </location>
</feature>
<feature type="transmembrane region" description="Helical" evidence="1">
    <location>
        <begin position="51"/>
        <end position="73"/>
    </location>
</feature>
<feature type="topological domain" description="Lumenal" evidence="1">
    <location>
        <begin position="74"/>
        <end position="142"/>
    </location>
</feature>
<feature type="transmembrane region" description="Helical" evidence="1">
    <location>
        <begin position="143"/>
        <end position="163"/>
    </location>
</feature>
<feature type="topological domain" description="Cytoplasmic" evidence="1">
    <location>
        <begin position="164"/>
        <end position="295"/>
    </location>
</feature>
<feature type="domain" description="Reticulon" evidence="2">
    <location>
        <begin position="20"/>
        <end position="220"/>
    </location>
</feature>
<feature type="region of interest" description="Disordered" evidence="3">
    <location>
        <begin position="219"/>
        <end position="295"/>
    </location>
</feature>
<feature type="coiled-coil region" evidence="1">
    <location>
        <begin position="265"/>
        <end position="295"/>
    </location>
</feature>
<feature type="compositionally biased region" description="Polar residues" evidence="3">
    <location>
        <begin position="219"/>
        <end position="235"/>
    </location>
</feature>
<feature type="modified residue" description="Phosphothreonine" evidence="7 8">
    <location>
        <position position="186"/>
    </location>
</feature>
<feature type="modified residue" description="Phosphothreonine" evidence="8">
    <location>
        <position position="219"/>
    </location>
</feature>
<feature type="modified residue" description="Phosphoserine" evidence="8">
    <location>
        <position position="232"/>
    </location>
</feature>
<protein>
    <recommendedName>
        <fullName>Reticulon-like protein 1</fullName>
    </recommendedName>
</protein>
<organism>
    <name type="scientific">Saccharomyces cerevisiae (strain ATCC 204508 / S288c)</name>
    <name type="common">Baker's yeast</name>
    <dbReference type="NCBI Taxonomy" id="559292"/>
    <lineage>
        <taxon>Eukaryota</taxon>
        <taxon>Fungi</taxon>
        <taxon>Dikarya</taxon>
        <taxon>Ascomycota</taxon>
        <taxon>Saccharomycotina</taxon>
        <taxon>Saccharomycetes</taxon>
        <taxon>Saccharomycetales</taxon>
        <taxon>Saccharomycetaceae</taxon>
        <taxon>Saccharomyces</taxon>
    </lineage>
</organism>
<dbReference type="EMBL" id="AY164798">
    <property type="protein sequence ID" value="AAP47373.1"/>
    <property type="molecule type" value="mRNA"/>
</dbReference>
<dbReference type="EMBL" id="Z48612">
    <property type="protein sequence ID" value="CAA88512.1"/>
    <property type="molecule type" value="Genomic_DNA"/>
</dbReference>
<dbReference type="EMBL" id="AY558579">
    <property type="protein sequence ID" value="AAS56905.1"/>
    <property type="molecule type" value="Genomic_DNA"/>
</dbReference>
<dbReference type="EMBL" id="BK006938">
    <property type="protein sequence ID" value="DAA12074.1"/>
    <property type="molecule type" value="Genomic_DNA"/>
</dbReference>
<dbReference type="PIR" id="S59439">
    <property type="entry name" value="S59439"/>
</dbReference>
<dbReference type="RefSeq" id="NP_010519.3">
    <property type="nucleotide sequence ID" value="NM_001180541.3"/>
</dbReference>
<dbReference type="BioGRID" id="32284">
    <property type="interactions" value="234"/>
</dbReference>
<dbReference type="DIP" id="DIP-4090N"/>
<dbReference type="FunCoup" id="Q04947">
    <property type="interactions" value="335"/>
</dbReference>
<dbReference type="IntAct" id="Q04947">
    <property type="interactions" value="40"/>
</dbReference>
<dbReference type="MINT" id="Q04947"/>
<dbReference type="STRING" id="4932.YDR233C"/>
<dbReference type="TCDB" id="8.A.102.1.4">
    <property type="family name" value="the reticulon (reticulon) family"/>
</dbReference>
<dbReference type="CarbonylDB" id="Q04947"/>
<dbReference type="GlyGen" id="Q04947">
    <property type="glycosylation" value="1 site, 1 O-linked glycan (1 site)"/>
</dbReference>
<dbReference type="iPTMnet" id="Q04947"/>
<dbReference type="PaxDb" id="4932-YDR233C"/>
<dbReference type="PeptideAtlas" id="Q04947"/>
<dbReference type="TopDownProteomics" id="Q04947"/>
<dbReference type="EnsemblFungi" id="YDR233C_mRNA">
    <property type="protein sequence ID" value="YDR233C"/>
    <property type="gene ID" value="YDR233C"/>
</dbReference>
<dbReference type="GeneID" id="851819"/>
<dbReference type="KEGG" id="sce:YDR233C"/>
<dbReference type="AGR" id="SGD:S000002641"/>
<dbReference type="SGD" id="S000002641">
    <property type="gene designation" value="RTN1"/>
</dbReference>
<dbReference type="VEuPathDB" id="FungiDB:YDR233C"/>
<dbReference type="eggNOG" id="KOG1792">
    <property type="taxonomic scope" value="Eukaryota"/>
</dbReference>
<dbReference type="GeneTree" id="ENSGT00940000176429"/>
<dbReference type="HOGENOM" id="CLU_050576_0_0_1"/>
<dbReference type="InParanoid" id="Q04947"/>
<dbReference type="OMA" id="TGLMKQY"/>
<dbReference type="OrthoDB" id="567788at2759"/>
<dbReference type="BioCyc" id="YEAST:G3O-29810-MONOMER"/>
<dbReference type="BioGRID-ORCS" id="851819">
    <property type="hits" value="0 hits in 10 CRISPR screens"/>
</dbReference>
<dbReference type="PRO" id="PR:Q04947"/>
<dbReference type="Proteomes" id="UP000002311">
    <property type="component" value="Chromosome IV"/>
</dbReference>
<dbReference type="RNAct" id="Q04947">
    <property type="molecule type" value="protein"/>
</dbReference>
<dbReference type="GO" id="GO:0071944">
    <property type="term" value="C:cell periphery"/>
    <property type="evidence" value="ECO:0007005"/>
    <property type="project" value="SGD"/>
</dbReference>
<dbReference type="GO" id="GO:0032541">
    <property type="term" value="C:cortical endoplasmic reticulum"/>
    <property type="evidence" value="ECO:0000314"/>
    <property type="project" value="SGD"/>
</dbReference>
<dbReference type="GO" id="GO:0098554">
    <property type="term" value="C:cytoplasmic side of endoplasmic reticulum membrane"/>
    <property type="evidence" value="ECO:0000314"/>
    <property type="project" value="UniProtKB"/>
</dbReference>
<dbReference type="GO" id="GO:0005783">
    <property type="term" value="C:endoplasmic reticulum"/>
    <property type="evidence" value="ECO:0000314"/>
    <property type="project" value="SGD"/>
</dbReference>
<dbReference type="GO" id="GO:0005789">
    <property type="term" value="C:endoplasmic reticulum membrane"/>
    <property type="evidence" value="ECO:0000314"/>
    <property type="project" value="SGD"/>
</dbReference>
<dbReference type="GO" id="GO:0071782">
    <property type="term" value="C:endoplasmic reticulum tubular network"/>
    <property type="evidence" value="ECO:0000314"/>
    <property type="project" value="UniProtKB"/>
</dbReference>
<dbReference type="GO" id="GO:0005794">
    <property type="term" value="C:Golgi apparatus"/>
    <property type="evidence" value="ECO:0000314"/>
    <property type="project" value="SGD"/>
</dbReference>
<dbReference type="GO" id="GO:0005739">
    <property type="term" value="C:mitochondrion"/>
    <property type="evidence" value="ECO:0007005"/>
    <property type="project" value="SGD"/>
</dbReference>
<dbReference type="GO" id="GO:0048309">
    <property type="term" value="P:endoplasmic reticulum inheritance"/>
    <property type="evidence" value="ECO:0000316"/>
    <property type="project" value="SGD"/>
</dbReference>
<dbReference type="GO" id="GO:0007029">
    <property type="term" value="P:endoplasmic reticulum organization"/>
    <property type="evidence" value="ECO:0000316"/>
    <property type="project" value="UniProtKB"/>
</dbReference>
<dbReference type="GO" id="GO:0071788">
    <property type="term" value="P:endoplasmic reticulum tubular network maintenance"/>
    <property type="evidence" value="ECO:0000316"/>
    <property type="project" value="SGD"/>
</dbReference>
<dbReference type="GO" id="GO:0071786">
    <property type="term" value="P:endoplasmic reticulum tubular network organization"/>
    <property type="evidence" value="ECO:0000315"/>
    <property type="project" value="UniProtKB"/>
</dbReference>
<dbReference type="GO" id="GO:0032581">
    <property type="term" value="P:ER-dependent peroxisome organization"/>
    <property type="evidence" value="ECO:0000316"/>
    <property type="project" value="SGD"/>
</dbReference>
<dbReference type="GO" id="GO:0051292">
    <property type="term" value="P:nuclear pore complex assembly"/>
    <property type="evidence" value="ECO:0000316"/>
    <property type="project" value="SGD"/>
</dbReference>
<dbReference type="GO" id="GO:0009617">
    <property type="term" value="P:response to bacterium"/>
    <property type="evidence" value="ECO:0007669"/>
    <property type="project" value="InterPro"/>
</dbReference>
<dbReference type="GO" id="GO:0034976">
    <property type="term" value="P:response to endoplasmic reticulum stress"/>
    <property type="evidence" value="ECO:0000316"/>
    <property type="project" value="SGD"/>
</dbReference>
<dbReference type="InterPro" id="IPR003388">
    <property type="entry name" value="Reticulon"/>
</dbReference>
<dbReference type="InterPro" id="IPR045064">
    <property type="entry name" value="Reticulon-like"/>
</dbReference>
<dbReference type="PANTHER" id="PTHR10994">
    <property type="entry name" value="RETICULON"/>
    <property type="match status" value="1"/>
</dbReference>
<dbReference type="PANTHER" id="PTHR10994:SF193">
    <property type="entry name" value="RETICULON-LIKE PROTEIN"/>
    <property type="match status" value="1"/>
</dbReference>
<dbReference type="Pfam" id="PF02453">
    <property type="entry name" value="Reticulon"/>
    <property type="match status" value="1"/>
</dbReference>
<dbReference type="PROSITE" id="PS50845">
    <property type="entry name" value="RETICULON"/>
    <property type="match status" value="1"/>
</dbReference>
<keyword id="KW-0175">Coiled coil</keyword>
<keyword id="KW-0903">Direct protein sequencing</keyword>
<keyword id="KW-0256">Endoplasmic reticulum</keyword>
<keyword id="KW-0472">Membrane</keyword>
<keyword id="KW-0597">Phosphoprotein</keyword>
<keyword id="KW-1185">Reference proteome</keyword>
<keyword id="KW-0812">Transmembrane</keyword>
<keyword id="KW-1133">Transmembrane helix</keyword>
<reference key="1">
    <citation type="journal article" date="2003" name="FASEB J.">
        <title>A reticular rhapsody: phylogenic evolution and nomenclature of the RTN/Nogo gene family.</title>
        <authorList>
            <person name="Oertle T."/>
            <person name="Klinger M."/>
            <person name="Stuermer C.A.O."/>
            <person name="Schwab M.E."/>
        </authorList>
    </citation>
    <scope>NUCLEOTIDE SEQUENCE [MRNA]</scope>
</reference>
<reference key="2">
    <citation type="journal article" date="1997" name="Nature">
        <title>The nucleotide sequence of Saccharomyces cerevisiae chromosome IV.</title>
        <authorList>
            <person name="Jacq C."/>
            <person name="Alt-Moerbe J."/>
            <person name="Andre B."/>
            <person name="Arnold W."/>
            <person name="Bahr A."/>
            <person name="Ballesta J.P.G."/>
            <person name="Bargues M."/>
            <person name="Baron L."/>
            <person name="Becker A."/>
            <person name="Biteau N."/>
            <person name="Bloecker H."/>
            <person name="Blugeon C."/>
            <person name="Boskovic J."/>
            <person name="Brandt P."/>
            <person name="Brueckner M."/>
            <person name="Buitrago M.J."/>
            <person name="Coster F."/>
            <person name="Delaveau T."/>
            <person name="del Rey F."/>
            <person name="Dujon B."/>
            <person name="Eide L.G."/>
            <person name="Garcia-Cantalejo J.M."/>
            <person name="Goffeau A."/>
            <person name="Gomez-Peris A."/>
            <person name="Granotier C."/>
            <person name="Hanemann V."/>
            <person name="Hankeln T."/>
            <person name="Hoheisel J.D."/>
            <person name="Jaeger W."/>
            <person name="Jimenez A."/>
            <person name="Jonniaux J.-L."/>
            <person name="Kraemer C."/>
            <person name="Kuester H."/>
            <person name="Laamanen P."/>
            <person name="Legros Y."/>
            <person name="Louis E.J."/>
            <person name="Moeller-Rieker S."/>
            <person name="Monnet A."/>
            <person name="Moro M."/>
            <person name="Mueller-Auer S."/>
            <person name="Nussbaumer B."/>
            <person name="Paricio N."/>
            <person name="Paulin L."/>
            <person name="Perea J."/>
            <person name="Perez-Alonso M."/>
            <person name="Perez-Ortin J.E."/>
            <person name="Pohl T.M."/>
            <person name="Prydz H."/>
            <person name="Purnelle B."/>
            <person name="Rasmussen S.W."/>
            <person name="Remacha M.A."/>
            <person name="Revuelta J.L."/>
            <person name="Rieger M."/>
            <person name="Salom D."/>
            <person name="Saluz H.P."/>
            <person name="Saiz J.E."/>
            <person name="Saren A.-M."/>
            <person name="Schaefer M."/>
            <person name="Scharfe M."/>
            <person name="Schmidt E.R."/>
            <person name="Schneider C."/>
            <person name="Scholler P."/>
            <person name="Schwarz S."/>
            <person name="Soler-Mira A."/>
            <person name="Urrestarazu L.A."/>
            <person name="Verhasselt P."/>
            <person name="Vissers S."/>
            <person name="Voet M."/>
            <person name="Volckaert G."/>
            <person name="Wagner G."/>
            <person name="Wambutt R."/>
            <person name="Wedler E."/>
            <person name="Wedler H."/>
            <person name="Woelfl S."/>
            <person name="Harris D.E."/>
            <person name="Bowman S."/>
            <person name="Brown D."/>
            <person name="Churcher C.M."/>
            <person name="Connor R."/>
            <person name="Dedman K."/>
            <person name="Gentles S."/>
            <person name="Hamlin N."/>
            <person name="Hunt S."/>
            <person name="Jones L."/>
            <person name="McDonald S."/>
            <person name="Murphy L.D."/>
            <person name="Niblett D."/>
            <person name="Odell C."/>
            <person name="Oliver K."/>
            <person name="Rajandream M.A."/>
            <person name="Richards C."/>
            <person name="Shore L."/>
            <person name="Walsh S.V."/>
            <person name="Barrell B.G."/>
            <person name="Dietrich F.S."/>
            <person name="Mulligan J.T."/>
            <person name="Allen E."/>
            <person name="Araujo R."/>
            <person name="Aviles E."/>
            <person name="Berno A."/>
            <person name="Carpenter J."/>
            <person name="Chen E."/>
            <person name="Cherry J.M."/>
            <person name="Chung E."/>
            <person name="Duncan M."/>
            <person name="Hunicke-Smith S."/>
            <person name="Hyman R.W."/>
            <person name="Komp C."/>
            <person name="Lashkari D."/>
            <person name="Lew H."/>
            <person name="Lin D."/>
            <person name="Mosedale D."/>
            <person name="Nakahara K."/>
            <person name="Namath A."/>
            <person name="Oefner P."/>
            <person name="Oh C."/>
            <person name="Petel F.X."/>
            <person name="Roberts D."/>
            <person name="Schramm S."/>
            <person name="Schroeder M."/>
            <person name="Shogren T."/>
            <person name="Shroff N."/>
            <person name="Winant A."/>
            <person name="Yelton M.A."/>
            <person name="Botstein D."/>
            <person name="Davis R.W."/>
            <person name="Johnston M."/>
            <person name="Andrews S."/>
            <person name="Brinkman R."/>
            <person name="Cooper J."/>
            <person name="Ding H."/>
            <person name="Du Z."/>
            <person name="Favello A."/>
            <person name="Fulton L."/>
            <person name="Gattung S."/>
            <person name="Greco T."/>
            <person name="Hallsworth K."/>
            <person name="Hawkins J."/>
            <person name="Hillier L.W."/>
            <person name="Jier M."/>
            <person name="Johnson D."/>
            <person name="Johnston L."/>
            <person name="Kirsten J."/>
            <person name="Kucaba T."/>
            <person name="Langston Y."/>
            <person name="Latreille P."/>
            <person name="Le T."/>
            <person name="Mardis E."/>
            <person name="Menezes S."/>
            <person name="Miller N."/>
            <person name="Nhan M."/>
            <person name="Pauley A."/>
            <person name="Peluso D."/>
            <person name="Rifkin L."/>
            <person name="Riles L."/>
            <person name="Taich A."/>
            <person name="Trevaskis E."/>
            <person name="Vignati D."/>
            <person name="Wilcox L."/>
            <person name="Wohldman P."/>
            <person name="Vaudin M."/>
            <person name="Wilson R."/>
            <person name="Waterston R."/>
            <person name="Albermann K."/>
            <person name="Hani J."/>
            <person name="Heumann K."/>
            <person name="Kleine K."/>
            <person name="Mewes H.-W."/>
            <person name="Zollner A."/>
            <person name="Zaccaria P."/>
        </authorList>
    </citation>
    <scope>NUCLEOTIDE SEQUENCE [LARGE SCALE GENOMIC DNA]</scope>
    <source>
        <strain>ATCC 204508 / S288c</strain>
    </source>
</reference>
<reference key="3">
    <citation type="journal article" date="2014" name="G3 (Bethesda)">
        <title>The reference genome sequence of Saccharomyces cerevisiae: Then and now.</title>
        <authorList>
            <person name="Engel S.R."/>
            <person name="Dietrich F.S."/>
            <person name="Fisk D.G."/>
            <person name="Binkley G."/>
            <person name="Balakrishnan R."/>
            <person name="Costanzo M.C."/>
            <person name="Dwight S.S."/>
            <person name="Hitz B.C."/>
            <person name="Karra K."/>
            <person name="Nash R.S."/>
            <person name="Weng S."/>
            <person name="Wong E.D."/>
            <person name="Lloyd P."/>
            <person name="Skrzypek M.S."/>
            <person name="Miyasato S.R."/>
            <person name="Simison M."/>
            <person name="Cherry J.M."/>
        </authorList>
    </citation>
    <scope>GENOME REANNOTATION</scope>
    <source>
        <strain>ATCC 204508 / S288c</strain>
    </source>
</reference>
<reference key="4">
    <citation type="journal article" date="2007" name="Genome Res.">
        <title>Approaching a complete repository of sequence-verified protein-encoding clones for Saccharomyces cerevisiae.</title>
        <authorList>
            <person name="Hu Y."/>
            <person name="Rolfs A."/>
            <person name="Bhullar B."/>
            <person name="Murthy T.V.S."/>
            <person name="Zhu C."/>
            <person name="Berger M.F."/>
            <person name="Camargo A.A."/>
            <person name="Kelley F."/>
            <person name="McCarron S."/>
            <person name="Jepson D."/>
            <person name="Richardson A."/>
            <person name="Raphael J."/>
            <person name="Moreira D."/>
            <person name="Taycher E."/>
            <person name="Zuo D."/>
            <person name="Mohr S."/>
            <person name="Kane M.F."/>
            <person name="Williamson J."/>
            <person name="Simpson A.J.G."/>
            <person name="Bulyk M.L."/>
            <person name="Harlow E."/>
            <person name="Marsischky G."/>
            <person name="Kolodner R.D."/>
            <person name="LaBaer J."/>
        </authorList>
    </citation>
    <scope>NUCLEOTIDE SEQUENCE [GENOMIC DNA]</scope>
    <source>
        <strain>ATCC 204508 / S288c</strain>
    </source>
</reference>
<reference key="5">
    <citation type="submission" date="2005-06" db="UniProtKB">
        <authorList>
            <person name="Bienvenut W.V."/>
            <person name="Peters C."/>
        </authorList>
    </citation>
    <scope>PROTEIN SEQUENCE OF 18-27; 219-247 AND 285-295</scope>
    <scope>IDENTIFICATION BY MASS SPECTROMETRY</scope>
</reference>
<reference key="6">
    <citation type="journal article" date="2003" name="Nature">
        <title>Global analysis of protein localization in budding yeast.</title>
        <authorList>
            <person name="Huh W.-K."/>
            <person name="Falvo J.V."/>
            <person name="Gerke L.C."/>
            <person name="Carroll A.S."/>
            <person name="Howson R.W."/>
            <person name="Weissman J.S."/>
            <person name="O'Shea E.K."/>
        </authorList>
    </citation>
    <scope>SUBCELLULAR LOCATION [LARGE SCALE ANALYSIS]</scope>
</reference>
<reference key="7">
    <citation type="journal article" date="2003" name="Nature">
        <title>Global analysis of protein expression in yeast.</title>
        <authorList>
            <person name="Ghaemmaghami S."/>
            <person name="Huh W.-K."/>
            <person name="Bower K."/>
            <person name="Howson R.W."/>
            <person name="Belle A."/>
            <person name="Dephoure N."/>
            <person name="O'Shea E.K."/>
            <person name="Weissman J.S."/>
        </authorList>
    </citation>
    <scope>LEVEL OF PROTEIN EXPRESSION [LARGE SCALE ANALYSIS]</scope>
</reference>
<reference key="8">
    <citation type="journal article" date="2006" name="Proc. Natl. Acad. Sci. U.S.A.">
        <title>A global topology map of the Saccharomyces cerevisiae membrane proteome.</title>
        <authorList>
            <person name="Kim H."/>
            <person name="Melen K."/>
            <person name="Oesterberg M."/>
            <person name="von Heijne G."/>
        </authorList>
    </citation>
    <scope>TOPOLOGY [LARGE SCALE ANALYSIS]</scope>
    <source>
        <strain>ATCC 208353 / W303-1A</strain>
    </source>
</reference>
<reference key="9">
    <citation type="journal article" date="2008" name="Mol. Cell. Proteomics">
        <title>A multidimensional chromatography technology for in-depth phosphoproteome analysis.</title>
        <authorList>
            <person name="Albuquerque C.P."/>
            <person name="Smolka M.B."/>
            <person name="Payne S.H."/>
            <person name="Bafna V."/>
            <person name="Eng J."/>
            <person name="Zhou H."/>
        </authorList>
    </citation>
    <scope>PHOSPHORYLATION [LARGE SCALE ANALYSIS] AT THR-186</scope>
    <scope>IDENTIFICATION BY MASS SPECTROMETRY [LARGE SCALE ANALYSIS]</scope>
</reference>
<reference key="10">
    <citation type="journal article" date="2009" name="Science">
        <title>Global analysis of Cdk1 substrate phosphorylation sites provides insights into evolution.</title>
        <authorList>
            <person name="Holt L.J."/>
            <person name="Tuch B.B."/>
            <person name="Villen J."/>
            <person name="Johnson A.D."/>
            <person name="Gygi S.P."/>
            <person name="Morgan D.O."/>
        </authorList>
    </citation>
    <scope>PHOSPHORYLATION [LARGE SCALE ANALYSIS] AT THR-186; THR-219 AND SER-232</scope>
    <scope>IDENTIFICATION BY MASS SPECTROMETRY [LARGE SCALE ANALYSIS]</scope>
</reference>
<reference key="11">
    <citation type="journal article" date="2010" name="J. Cell Biol.">
        <title>Pom33, a novel transmembrane nucleoporin required for proper nuclear pore complex distribution.</title>
        <authorList>
            <person name="Chadrin A."/>
            <person name="Hess B."/>
            <person name="San Roman M."/>
            <person name="Gatti X."/>
            <person name="Lombard B."/>
            <person name="Loew D."/>
            <person name="Barral Y."/>
            <person name="Palancade B."/>
            <person name="Doye V."/>
        </authorList>
    </citation>
    <scope>INTERACTION WITH POM33</scope>
</reference>
<name>RTN1_YEAST</name>
<evidence type="ECO:0000255" key="1"/>
<evidence type="ECO:0000255" key="2">
    <source>
        <dbReference type="PROSITE-ProRule" id="PRU00170"/>
    </source>
</evidence>
<evidence type="ECO:0000256" key="3">
    <source>
        <dbReference type="SAM" id="MobiDB-lite"/>
    </source>
</evidence>
<evidence type="ECO:0000269" key="4">
    <source>
    </source>
</evidence>
<evidence type="ECO:0000269" key="5">
    <source>
    </source>
</evidence>
<evidence type="ECO:0000269" key="6">
    <source>
    </source>
</evidence>
<evidence type="ECO:0007744" key="7">
    <source>
    </source>
</evidence>
<evidence type="ECO:0007744" key="8">
    <source>
    </source>
</evidence>
<accession>Q04947</accession>
<accession>D6VSL4</accession>
<sequence length="295" mass="32916">MSASAQHSQAQQQQQQKSCNCDLLLWRNPVQTGKYFGGSLLALLILKKVNLITFFLKVAYTILFTTGSIEFVSKLFLGQGLITKYGPKECPNIAGFIKPHIDEALKQLPVFQAHIRKTVFAQVPKHTFKTAVALFLLHKFFSWFSIWTIVFVADIFTFTLPVIYHSYKHEIDATVAQGVEISKQKTQEFSQMACEKTKPYLDKVESKLGPISNLVKSKTAPVSSTAGPQTASTSKLAADVPLEPESKAYTSSAQVMPEVPQHEPSTTQEFNVDELSNELKKSTKNLQNELEKNNA</sequence>
<gene>
    <name type="primary">RTN1</name>
    <name type="ordered locus">YDR233C</name>
</gene>
<proteinExistence type="evidence at protein level"/>
<comment type="subunit">
    <text evidence="6">Interacts with POM33.</text>
</comment>
<comment type="interaction">
    <interactant intactId="EBI-38020">
        <id>Q04947</id>
    </interactant>
    <interactant intactId="EBI-32591">
        <id>Q12443</id>
        <label>RTN2</label>
    </interactant>
    <organismsDiffer>false</organismsDiffer>
    <experiments>3</experiments>
</comment>
<comment type="interaction">
    <interactant intactId="EBI-38020">
        <id>Q04947</id>
    </interactant>
    <interactant intactId="EBI-37523">
        <id>Q99287</id>
        <label>SEY1</label>
    </interactant>
    <organismsDiffer>false</organismsDiffer>
    <experiments>3</experiments>
</comment>
<comment type="interaction">
    <interactant intactId="EBI-38020">
        <id>Q04947</id>
    </interactant>
    <interactant intactId="EBI-37092">
        <id>Q12402</id>
        <label>YOP1</label>
    </interactant>
    <organismsDiffer>false</organismsDiffer>
    <experiments>2</experiments>
</comment>
<comment type="interaction">
    <interactant intactId="EBI-38020">
        <id>Q04947</id>
    </interactant>
    <interactant intactId="EBI-15874242">
        <id>P03588</id>
        <label>ORF1a</label>
    </interactant>
    <organismsDiffer>true</organismsDiffer>
    <experiments>4</experiments>
</comment>
<comment type="subcellular location">
    <subcellularLocation>
        <location evidence="4">Endoplasmic reticulum membrane</location>
        <topology evidence="4">Multi-pass membrane protein</topology>
    </subcellularLocation>
</comment>
<comment type="miscellaneous">
    <text evidence="5">Present with 37105 molecules/cell in log phase SD medium.</text>
</comment>